<sequence length="773" mass="84670">MAKETFSIEFAGRTLTVETGQVAKQANGAVVVRYGDTTVLTAATMGKMATGDFFPLQVNYEEKMYAAGKFPGGFNKREARPSTDATLTARLIDRPIRPMFAEGFRNEVQVINTVLSYDENASGRVAAMFGSSLALAISDIPFDRPIAGVEVAYIDGEYIINPTVAEKEASSLELSVAGNINAINMVESGAKELSEEVMLGALLAGHNAVKELIEFQNEIVAKVGKEKAEVELLHVDEDLKAEVIAAYNSDLQKAVQIEEKLARESATKAVKEAIISVYSAKYENDENLSIILRDLAEILEGMEHAEVRRLITEDKIRPDGRKIDEIRPLDAEIDFTPRNITHGTGLFTRGQTQALSTLTLAPMNEAQIIDGLNDEYKKRFMHHYNFPQYSVGETGRYGAPGRREIGHGALGERALEQVLPSLEEFPYAIRLVAEVLESNGSSSQASICAGTLALMAGGVPIKAPVAGIAMGLISDGTNYTVLTDIQGLEDHFGDMDFKVAGTRDGITALQMDIKISGITPEILAEALAQAKTARFQILDVIEATIAQPREELAPSAPKIDTITIPVDKIKVVIGKGGEQIDKIIAETGVKIDIDDEGLCSIFSSDQAAIDRAKEIIAELVREAKVGEIYDAKVVRIESFGAFVNLFGKQDAMVHISEMAWARTENVEDVVKLGDTVKVKIMKIDDKGRVDASMRALVEKPEGYVEPERKPRERRENGDRRKGNGNSNRGNGFDRRNNDRNNQGNKVGNHSFELRERKSHIDEEFPELSTKKPE</sequence>
<gene>
    <name evidence="1" type="primary">pnp</name>
    <name type="ordered locus">LL1855</name>
    <name type="ORF">L0325</name>
</gene>
<accession>Q9CEI6</accession>
<dbReference type="EC" id="2.7.7.8" evidence="1"/>
<dbReference type="EMBL" id="AE005176">
    <property type="protein sequence ID" value="AAK05953.1"/>
    <property type="molecule type" value="Genomic_DNA"/>
</dbReference>
<dbReference type="PIR" id="G86856">
    <property type="entry name" value="G86856"/>
</dbReference>
<dbReference type="RefSeq" id="NP_268012.1">
    <property type="nucleotide sequence ID" value="NC_002662.1"/>
</dbReference>
<dbReference type="RefSeq" id="WP_003132367.1">
    <property type="nucleotide sequence ID" value="NC_002662.1"/>
</dbReference>
<dbReference type="SMR" id="Q9CEI6"/>
<dbReference type="PaxDb" id="272623-L0325"/>
<dbReference type="EnsemblBacteria" id="AAK05953">
    <property type="protein sequence ID" value="AAK05953"/>
    <property type="gene ID" value="L0325"/>
</dbReference>
<dbReference type="KEGG" id="lla:L0325"/>
<dbReference type="PATRIC" id="fig|272623.7.peg.1987"/>
<dbReference type="eggNOG" id="COG1185">
    <property type="taxonomic scope" value="Bacteria"/>
</dbReference>
<dbReference type="HOGENOM" id="CLU_004217_2_2_9"/>
<dbReference type="OrthoDB" id="9804305at2"/>
<dbReference type="Proteomes" id="UP000002196">
    <property type="component" value="Chromosome"/>
</dbReference>
<dbReference type="GO" id="GO:0005829">
    <property type="term" value="C:cytosol"/>
    <property type="evidence" value="ECO:0007669"/>
    <property type="project" value="TreeGrafter"/>
</dbReference>
<dbReference type="GO" id="GO:0000175">
    <property type="term" value="F:3'-5'-RNA exonuclease activity"/>
    <property type="evidence" value="ECO:0007669"/>
    <property type="project" value="TreeGrafter"/>
</dbReference>
<dbReference type="GO" id="GO:0000287">
    <property type="term" value="F:magnesium ion binding"/>
    <property type="evidence" value="ECO:0007669"/>
    <property type="project" value="UniProtKB-UniRule"/>
</dbReference>
<dbReference type="GO" id="GO:0004654">
    <property type="term" value="F:polyribonucleotide nucleotidyltransferase activity"/>
    <property type="evidence" value="ECO:0007669"/>
    <property type="project" value="UniProtKB-UniRule"/>
</dbReference>
<dbReference type="GO" id="GO:0003723">
    <property type="term" value="F:RNA binding"/>
    <property type="evidence" value="ECO:0007669"/>
    <property type="project" value="UniProtKB-UniRule"/>
</dbReference>
<dbReference type="GO" id="GO:0006402">
    <property type="term" value="P:mRNA catabolic process"/>
    <property type="evidence" value="ECO:0007669"/>
    <property type="project" value="UniProtKB-UniRule"/>
</dbReference>
<dbReference type="GO" id="GO:0006396">
    <property type="term" value="P:RNA processing"/>
    <property type="evidence" value="ECO:0007669"/>
    <property type="project" value="InterPro"/>
</dbReference>
<dbReference type="CDD" id="cd02393">
    <property type="entry name" value="KH-I_PNPase"/>
    <property type="match status" value="1"/>
</dbReference>
<dbReference type="CDD" id="cd11363">
    <property type="entry name" value="RNase_PH_PNPase_1"/>
    <property type="match status" value="1"/>
</dbReference>
<dbReference type="CDD" id="cd11364">
    <property type="entry name" value="RNase_PH_PNPase_2"/>
    <property type="match status" value="1"/>
</dbReference>
<dbReference type="FunFam" id="3.30.1370.10:FF:000001">
    <property type="entry name" value="Polyribonucleotide nucleotidyltransferase"/>
    <property type="match status" value="1"/>
</dbReference>
<dbReference type="FunFam" id="3.30.230.70:FF:000001">
    <property type="entry name" value="Polyribonucleotide nucleotidyltransferase"/>
    <property type="match status" value="1"/>
</dbReference>
<dbReference type="FunFam" id="3.30.230.70:FF:000002">
    <property type="entry name" value="Polyribonucleotide nucleotidyltransferase"/>
    <property type="match status" value="1"/>
</dbReference>
<dbReference type="Gene3D" id="3.30.230.70">
    <property type="entry name" value="GHMP Kinase, N-terminal domain"/>
    <property type="match status" value="2"/>
</dbReference>
<dbReference type="Gene3D" id="3.30.1370.10">
    <property type="entry name" value="K Homology domain, type 1"/>
    <property type="match status" value="1"/>
</dbReference>
<dbReference type="Gene3D" id="2.40.50.140">
    <property type="entry name" value="Nucleic acid-binding proteins"/>
    <property type="match status" value="1"/>
</dbReference>
<dbReference type="HAMAP" id="MF_01595">
    <property type="entry name" value="PNPase"/>
    <property type="match status" value="1"/>
</dbReference>
<dbReference type="InterPro" id="IPR001247">
    <property type="entry name" value="ExoRNase_PH_dom1"/>
</dbReference>
<dbReference type="InterPro" id="IPR015847">
    <property type="entry name" value="ExoRNase_PH_dom2"/>
</dbReference>
<dbReference type="InterPro" id="IPR036345">
    <property type="entry name" value="ExoRNase_PH_dom2_sf"/>
</dbReference>
<dbReference type="InterPro" id="IPR004087">
    <property type="entry name" value="KH_dom"/>
</dbReference>
<dbReference type="InterPro" id="IPR004088">
    <property type="entry name" value="KH_dom_type_1"/>
</dbReference>
<dbReference type="InterPro" id="IPR036612">
    <property type="entry name" value="KH_dom_type_1_sf"/>
</dbReference>
<dbReference type="InterPro" id="IPR012340">
    <property type="entry name" value="NA-bd_OB-fold"/>
</dbReference>
<dbReference type="InterPro" id="IPR012162">
    <property type="entry name" value="PNPase"/>
</dbReference>
<dbReference type="InterPro" id="IPR027408">
    <property type="entry name" value="PNPase/RNase_PH_dom_sf"/>
</dbReference>
<dbReference type="InterPro" id="IPR015848">
    <property type="entry name" value="PNPase_PH_RNA-bd_bac/org-type"/>
</dbReference>
<dbReference type="InterPro" id="IPR036456">
    <property type="entry name" value="PNPase_PH_RNA-bd_sf"/>
</dbReference>
<dbReference type="InterPro" id="IPR020568">
    <property type="entry name" value="Ribosomal_Su5_D2-typ_SF"/>
</dbReference>
<dbReference type="InterPro" id="IPR003029">
    <property type="entry name" value="S1_domain"/>
</dbReference>
<dbReference type="NCBIfam" id="TIGR03591">
    <property type="entry name" value="polynuc_phos"/>
    <property type="match status" value="1"/>
</dbReference>
<dbReference type="NCBIfam" id="NF008805">
    <property type="entry name" value="PRK11824.1"/>
    <property type="match status" value="1"/>
</dbReference>
<dbReference type="PANTHER" id="PTHR11252">
    <property type="entry name" value="POLYRIBONUCLEOTIDE NUCLEOTIDYLTRANSFERASE"/>
    <property type="match status" value="1"/>
</dbReference>
<dbReference type="PANTHER" id="PTHR11252:SF0">
    <property type="entry name" value="POLYRIBONUCLEOTIDE NUCLEOTIDYLTRANSFERASE 1, MITOCHONDRIAL"/>
    <property type="match status" value="1"/>
</dbReference>
<dbReference type="Pfam" id="PF00013">
    <property type="entry name" value="KH_1"/>
    <property type="match status" value="1"/>
</dbReference>
<dbReference type="Pfam" id="PF03726">
    <property type="entry name" value="PNPase"/>
    <property type="match status" value="1"/>
</dbReference>
<dbReference type="Pfam" id="PF01138">
    <property type="entry name" value="RNase_PH"/>
    <property type="match status" value="2"/>
</dbReference>
<dbReference type="Pfam" id="PF03725">
    <property type="entry name" value="RNase_PH_C"/>
    <property type="match status" value="2"/>
</dbReference>
<dbReference type="Pfam" id="PF00575">
    <property type="entry name" value="S1"/>
    <property type="match status" value="1"/>
</dbReference>
<dbReference type="PIRSF" id="PIRSF005499">
    <property type="entry name" value="PNPase"/>
    <property type="match status" value="1"/>
</dbReference>
<dbReference type="SMART" id="SM00322">
    <property type="entry name" value="KH"/>
    <property type="match status" value="1"/>
</dbReference>
<dbReference type="SMART" id="SM00316">
    <property type="entry name" value="S1"/>
    <property type="match status" value="1"/>
</dbReference>
<dbReference type="SUPFAM" id="SSF54791">
    <property type="entry name" value="Eukaryotic type KH-domain (KH-domain type I)"/>
    <property type="match status" value="1"/>
</dbReference>
<dbReference type="SUPFAM" id="SSF50249">
    <property type="entry name" value="Nucleic acid-binding proteins"/>
    <property type="match status" value="1"/>
</dbReference>
<dbReference type="SUPFAM" id="SSF46915">
    <property type="entry name" value="Polynucleotide phosphorylase/guanosine pentaphosphate synthase (PNPase/GPSI), domain 3"/>
    <property type="match status" value="1"/>
</dbReference>
<dbReference type="SUPFAM" id="SSF55666">
    <property type="entry name" value="Ribonuclease PH domain 2-like"/>
    <property type="match status" value="2"/>
</dbReference>
<dbReference type="SUPFAM" id="SSF54211">
    <property type="entry name" value="Ribosomal protein S5 domain 2-like"/>
    <property type="match status" value="2"/>
</dbReference>
<dbReference type="PROSITE" id="PS50084">
    <property type="entry name" value="KH_TYPE_1"/>
    <property type="match status" value="1"/>
</dbReference>
<dbReference type="PROSITE" id="PS50126">
    <property type="entry name" value="S1"/>
    <property type="match status" value="1"/>
</dbReference>
<name>PNP_LACLA</name>
<keyword id="KW-0963">Cytoplasm</keyword>
<keyword id="KW-0460">Magnesium</keyword>
<keyword id="KW-0479">Metal-binding</keyword>
<keyword id="KW-0548">Nucleotidyltransferase</keyword>
<keyword id="KW-1185">Reference proteome</keyword>
<keyword id="KW-0694">RNA-binding</keyword>
<keyword id="KW-0808">Transferase</keyword>
<protein>
    <recommendedName>
        <fullName evidence="1">Polyribonucleotide nucleotidyltransferase</fullName>
        <ecNumber evidence="1">2.7.7.8</ecNumber>
    </recommendedName>
    <alternativeName>
        <fullName evidence="1">Polynucleotide phosphorylase</fullName>
        <shortName evidence="1">PNPase</shortName>
    </alternativeName>
</protein>
<evidence type="ECO:0000255" key="1">
    <source>
        <dbReference type="HAMAP-Rule" id="MF_01595"/>
    </source>
</evidence>
<evidence type="ECO:0000256" key="2">
    <source>
        <dbReference type="SAM" id="MobiDB-lite"/>
    </source>
</evidence>
<comment type="function">
    <text evidence="1">Involved in mRNA degradation. Catalyzes the phosphorolysis of single-stranded polyribonucleotides processively in the 3'- to 5'-direction.</text>
</comment>
<comment type="catalytic activity">
    <reaction evidence="1">
        <text>RNA(n+1) + phosphate = RNA(n) + a ribonucleoside 5'-diphosphate</text>
        <dbReference type="Rhea" id="RHEA:22096"/>
        <dbReference type="Rhea" id="RHEA-COMP:14527"/>
        <dbReference type="Rhea" id="RHEA-COMP:17342"/>
        <dbReference type="ChEBI" id="CHEBI:43474"/>
        <dbReference type="ChEBI" id="CHEBI:57930"/>
        <dbReference type="ChEBI" id="CHEBI:140395"/>
        <dbReference type="EC" id="2.7.7.8"/>
    </reaction>
</comment>
<comment type="cofactor">
    <cofactor evidence="1">
        <name>Mg(2+)</name>
        <dbReference type="ChEBI" id="CHEBI:18420"/>
    </cofactor>
</comment>
<comment type="subcellular location">
    <subcellularLocation>
        <location evidence="1">Cytoplasm</location>
    </subcellularLocation>
</comment>
<comment type="similarity">
    <text evidence="1">Belongs to the polyribonucleotide nucleotidyltransferase family.</text>
</comment>
<feature type="chain" id="PRO_0000329690" description="Polyribonucleotide nucleotidyltransferase">
    <location>
        <begin position="1"/>
        <end position="773"/>
    </location>
</feature>
<feature type="domain" description="KH" evidence="1">
    <location>
        <begin position="557"/>
        <end position="616"/>
    </location>
</feature>
<feature type="domain" description="S1 motif" evidence="1">
    <location>
        <begin position="626"/>
        <end position="694"/>
    </location>
</feature>
<feature type="region of interest" description="Disordered" evidence="2">
    <location>
        <begin position="700"/>
        <end position="773"/>
    </location>
</feature>
<feature type="compositionally biased region" description="Basic and acidic residues" evidence="2">
    <location>
        <begin position="700"/>
        <end position="721"/>
    </location>
</feature>
<feature type="compositionally biased region" description="Low complexity" evidence="2">
    <location>
        <begin position="739"/>
        <end position="748"/>
    </location>
</feature>
<feature type="compositionally biased region" description="Basic and acidic residues" evidence="2">
    <location>
        <begin position="751"/>
        <end position="773"/>
    </location>
</feature>
<feature type="binding site" evidence="1">
    <location>
        <position position="490"/>
    </location>
    <ligand>
        <name>Mg(2+)</name>
        <dbReference type="ChEBI" id="CHEBI:18420"/>
    </ligand>
</feature>
<feature type="binding site" evidence="1">
    <location>
        <position position="496"/>
    </location>
    <ligand>
        <name>Mg(2+)</name>
        <dbReference type="ChEBI" id="CHEBI:18420"/>
    </ligand>
</feature>
<reference key="1">
    <citation type="journal article" date="2001" name="Genome Res.">
        <title>The complete genome sequence of the lactic acid bacterium Lactococcus lactis ssp. lactis IL1403.</title>
        <authorList>
            <person name="Bolotin A."/>
            <person name="Wincker P."/>
            <person name="Mauger S."/>
            <person name="Jaillon O."/>
            <person name="Malarme K."/>
            <person name="Weissenbach J."/>
            <person name="Ehrlich S.D."/>
            <person name="Sorokin A."/>
        </authorList>
    </citation>
    <scope>NUCLEOTIDE SEQUENCE [LARGE SCALE GENOMIC DNA]</scope>
    <source>
        <strain>IL1403</strain>
    </source>
</reference>
<organism>
    <name type="scientific">Lactococcus lactis subsp. lactis (strain IL1403)</name>
    <name type="common">Streptococcus lactis</name>
    <dbReference type="NCBI Taxonomy" id="272623"/>
    <lineage>
        <taxon>Bacteria</taxon>
        <taxon>Bacillati</taxon>
        <taxon>Bacillota</taxon>
        <taxon>Bacilli</taxon>
        <taxon>Lactobacillales</taxon>
        <taxon>Streptococcaceae</taxon>
        <taxon>Lactococcus</taxon>
    </lineage>
</organism>
<proteinExistence type="inferred from homology"/>